<dbReference type="EMBL" id="CP000158">
    <property type="protein sequence ID" value="ABI75660.1"/>
    <property type="molecule type" value="Genomic_DNA"/>
</dbReference>
<dbReference type="RefSeq" id="WP_011646024.1">
    <property type="nucleotide sequence ID" value="NC_008358.1"/>
</dbReference>
<dbReference type="SMR" id="Q0C3G9"/>
<dbReference type="STRING" id="228405.HNE_1001"/>
<dbReference type="KEGG" id="hne:HNE_1001"/>
<dbReference type="eggNOG" id="COG0239">
    <property type="taxonomic scope" value="Bacteria"/>
</dbReference>
<dbReference type="HOGENOM" id="CLU_114342_2_3_5"/>
<dbReference type="Proteomes" id="UP000001959">
    <property type="component" value="Chromosome"/>
</dbReference>
<dbReference type="GO" id="GO:0005886">
    <property type="term" value="C:plasma membrane"/>
    <property type="evidence" value="ECO:0007669"/>
    <property type="project" value="UniProtKB-SubCell"/>
</dbReference>
<dbReference type="GO" id="GO:0062054">
    <property type="term" value="F:fluoride channel activity"/>
    <property type="evidence" value="ECO:0007669"/>
    <property type="project" value="UniProtKB-UniRule"/>
</dbReference>
<dbReference type="GO" id="GO:0046872">
    <property type="term" value="F:metal ion binding"/>
    <property type="evidence" value="ECO:0007669"/>
    <property type="project" value="UniProtKB-KW"/>
</dbReference>
<dbReference type="GO" id="GO:0140114">
    <property type="term" value="P:cellular detoxification of fluoride"/>
    <property type="evidence" value="ECO:0007669"/>
    <property type="project" value="UniProtKB-UniRule"/>
</dbReference>
<dbReference type="HAMAP" id="MF_00454">
    <property type="entry name" value="FluC"/>
    <property type="match status" value="1"/>
</dbReference>
<dbReference type="InterPro" id="IPR003691">
    <property type="entry name" value="FluC"/>
</dbReference>
<dbReference type="NCBIfam" id="TIGR00494">
    <property type="entry name" value="crcB"/>
    <property type="match status" value="1"/>
</dbReference>
<dbReference type="NCBIfam" id="NF010791">
    <property type="entry name" value="PRK14195.1"/>
    <property type="match status" value="1"/>
</dbReference>
<dbReference type="PANTHER" id="PTHR28259">
    <property type="entry name" value="FLUORIDE EXPORT PROTEIN 1-RELATED"/>
    <property type="match status" value="1"/>
</dbReference>
<dbReference type="PANTHER" id="PTHR28259:SF1">
    <property type="entry name" value="FLUORIDE EXPORT PROTEIN 1-RELATED"/>
    <property type="match status" value="1"/>
</dbReference>
<dbReference type="Pfam" id="PF02537">
    <property type="entry name" value="CRCB"/>
    <property type="match status" value="1"/>
</dbReference>
<evidence type="ECO:0000255" key="1">
    <source>
        <dbReference type="HAMAP-Rule" id="MF_00454"/>
    </source>
</evidence>
<proteinExistence type="inferred from homology"/>
<sequence length="127" mass="13092">MNGFLLVALGGAIGASLRHGVGLVAVRHLPLGWPWGTSFVNIAGSLAMGLLAGWLALKAEGASQEARLFLATGVLGGFTTFSAFSLEVATMLRSGETLKAGLYAGVSVLLGVSALFIGLWMARRIFA</sequence>
<feature type="chain" id="PRO_1000026395" description="Fluoride-specific ion channel FluC">
    <location>
        <begin position="1"/>
        <end position="127"/>
    </location>
</feature>
<feature type="transmembrane region" description="Helical" evidence="1">
    <location>
        <begin position="37"/>
        <end position="57"/>
    </location>
</feature>
<feature type="transmembrane region" description="Helical" evidence="1">
    <location>
        <begin position="68"/>
        <end position="88"/>
    </location>
</feature>
<feature type="transmembrane region" description="Helical" evidence="1">
    <location>
        <begin position="102"/>
        <end position="122"/>
    </location>
</feature>
<feature type="binding site" evidence="1">
    <location>
        <position position="76"/>
    </location>
    <ligand>
        <name>Na(+)</name>
        <dbReference type="ChEBI" id="CHEBI:29101"/>
        <note>structural</note>
    </ligand>
</feature>
<feature type="binding site" evidence="1">
    <location>
        <position position="79"/>
    </location>
    <ligand>
        <name>Na(+)</name>
        <dbReference type="ChEBI" id="CHEBI:29101"/>
        <note>structural</note>
    </ligand>
</feature>
<reference key="1">
    <citation type="journal article" date="2006" name="J. Bacteriol.">
        <title>Comparative genomic evidence for a close relationship between the dimorphic prosthecate bacteria Hyphomonas neptunium and Caulobacter crescentus.</title>
        <authorList>
            <person name="Badger J.H."/>
            <person name="Hoover T.R."/>
            <person name="Brun Y.V."/>
            <person name="Weiner R.M."/>
            <person name="Laub M.T."/>
            <person name="Alexandre G."/>
            <person name="Mrazek J."/>
            <person name="Ren Q."/>
            <person name="Paulsen I.T."/>
            <person name="Nelson K.E."/>
            <person name="Khouri H.M."/>
            <person name="Radune D."/>
            <person name="Sosa J."/>
            <person name="Dodson R.J."/>
            <person name="Sullivan S.A."/>
            <person name="Rosovitz M.J."/>
            <person name="Madupu R."/>
            <person name="Brinkac L.M."/>
            <person name="Durkin A.S."/>
            <person name="Daugherty S.C."/>
            <person name="Kothari S.P."/>
            <person name="Giglio M.G."/>
            <person name="Zhou L."/>
            <person name="Haft D.H."/>
            <person name="Selengut J.D."/>
            <person name="Davidsen T.M."/>
            <person name="Yang Q."/>
            <person name="Zafar N."/>
            <person name="Ward N.L."/>
        </authorList>
    </citation>
    <scope>NUCLEOTIDE SEQUENCE [LARGE SCALE GENOMIC DNA]</scope>
    <source>
        <strain>ATCC 15444</strain>
    </source>
</reference>
<accession>Q0C3G9</accession>
<gene>
    <name evidence="1" type="primary">fluC</name>
    <name evidence="1" type="synonym">crcB</name>
    <name type="ordered locus">HNE_1001</name>
</gene>
<organism>
    <name type="scientific">Hyphomonas neptunium (strain ATCC 15444)</name>
    <dbReference type="NCBI Taxonomy" id="228405"/>
    <lineage>
        <taxon>Bacteria</taxon>
        <taxon>Pseudomonadati</taxon>
        <taxon>Pseudomonadota</taxon>
        <taxon>Alphaproteobacteria</taxon>
        <taxon>Hyphomonadales</taxon>
        <taxon>Hyphomonadaceae</taxon>
        <taxon>Hyphomonas</taxon>
    </lineage>
</organism>
<name>FLUC_HYPNA</name>
<comment type="function">
    <text evidence="1">Fluoride-specific ion channel. Important for reducing fluoride concentration in the cell, thus reducing its toxicity.</text>
</comment>
<comment type="catalytic activity">
    <reaction evidence="1">
        <text>fluoride(in) = fluoride(out)</text>
        <dbReference type="Rhea" id="RHEA:76159"/>
        <dbReference type="ChEBI" id="CHEBI:17051"/>
    </reaction>
    <physiologicalReaction direction="left-to-right" evidence="1">
        <dbReference type="Rhea" id="RHEA:76160"/>
    </physiologicalReaction>
</comment>
<comment type="activity regulation">
    <text evidence="1">Na(+) is not transported, but it plays an essential structural role and its presence is essential for fluoride channel function.</text>
</comment>
<comment type="subcellular location">
    <subcellularLocation>
        <location evidence="1">Cell inner membrane</location>
        <topology evidence="1">Multi-pass membrane protein</topology>
    </subcellularLocation>
</comment>
<comment type="similarity">
    <text evidence="1">Belongs to the fluoride channel Fluc/FEX (TC 1.A.43) family.</text>
</comment>
<protein>
    <recommendedName>
        <fullName evidence="1">Fluoride-specific ion channel FluC</fullName>
    </recommendedName>
</protein>
<keyword id="KW-0997">Cell inner membrane</keyword>
<keyword id="KW-1003">Cell membrane</keyword>
<keyword id="KW-0407">Ion channel</keyword>
<keyword id="KW-0406">Ion transport</keyword>
<keyword id="KW-0472">Membrane</keyword>
<keyword id="KW-0479">Metal-binding</keyword>
<keyword id="KW-1185">Reference proteome</keyword>
<keyword id="KW-0915">Sodium</keyword>
<keyword id="KW-0812">Transmembrane</keyword>
<keyword id="KW-1133">Transmembrane helix</keyword>
<keyword id="KW-0813">Transport</keyword>